<dbReference type="EC" id="6.3.2.1"/>
<dbReference type="EMBL" id="Y10252">
    <property type="protein sequence ID" value="CAA71302.1"/>
    <property type="molecule type" value="mRNA"/>
</dbReference>
<dbReference type="SMR" id="O24035"/>
<dbReference type="OMA" id="CNHKLEP"/>
<dbReference type="OrthoDB" id="2020436at2759"/>
<dbReference type="BioCyc" id="MetaCyc:MONOMER-9445"/>
<dbReference type="BRENDA" id="6.3.2.1">
    <property type="organism ID" value="3076"/>
</dbReference>
<dbReference type="UniPathway" id="UPA00028">
    <property type="reaction ID" value="UER00005"/>
</dbReference>
<dbReference type="GO" id="GO:0005829">
    <property type="term" value="C:cytosol"/>
    <property type="evidence" value="ECO:0007669"/>
    <property type="project" value="TreeGrafter"/>
</dbReference>
<dbReference type="GO" id="GO:0005524">
    <property type="term" value="F:ATP binding"/>
    <property type="evidence" value="ECO:0007669"/>
    <property type="project" value="UniProtKB-KW"/>
</dbReference>
<dbReference type="GO" id="GO:0004592">
    <property type="term" value="F:pantoate-beta-alanine ligase activity"/>
    <property type="evidence" value="ECO:0007669"/>
    <property type="project" value="UniProtKB-EC"/>
</dbReference>
<dbReference type="GO" id="GO:0015940">
    <property type="term" value="P:pantothenate biosynthetic process"/>
    <property type="evidence" value="ECO:0007669"/>
    <property type="project" value="UniProtKB-UniPathway"/>
</dbReference>
<dbReference type="CDD" id="cd00560">
    <property type="entry name" value="PanC"/>
    <property type="match status" value="1"/>
</dbReference>
<dbReference type="FunFam" id="3.40.50.620:FF:000160">
    <property type="entry name" value="Pantoate--beta-alanine ligase"/>
    <property type="match status" value="1"/>
</dbReference>
<dbReference type="FunFam" id="3.30.1300.10:FF:000001">
    <property type="entry name" value="Pantothenate synthetase"/>
    <property type="match status" value="1"/>
</dbReference>
<dbReference type="Gene3D" id="3.40.50.620">
    <property type="entry name" value="HUPs"/>
    <property type="match status" value="1"/>
</dbReference>
<dbReference type="Gene3D" id="3.30.1300.10">
    <property type="entry name" value="Pantoate-beta-alanine ligase, C-terminal domain"/>
    <property type="match status" value="1"/>
</dbReference>
<dbReference type="HAMAP" id="MF_00158">
    <property type="entry name" value="PanC"/>
    <property type="match status" value="1"/>
</dbReference>
<dbReference type="InterPro" id="IPR003721">
    <property type="entry name" value="Pantoate_ligase"/>
</dbReference>
<dbReference type="InterPro" id="IPR042176">
    <property type="entry name" value="Pantoate_ligase_C"/>
</dbReference>
<dbReference type="InterPro" id="IPR014729">
    <property type="entry name" value="Rossmann-like_a/b/a_fold"/>
</dbReference>
<dbReference type="NCBIfam" id="TIGR00018">
    <property type="entry name" value="panC"/>
    <property type="match status" value="1"/>
</dbReference>
<dbReference type="PANTHER" id="PTHR21299">
    <property type="entry name" value="CYTIDYLATE KINASE/PANTOATE-BETA-ALANINE LIGASE"/>
    <property type="match status" value="1"/>
</dbReference>
<dbReference type="PANTHER" id="PTHR21299:SF1">
    <property type="entry name" value="PANTOATE--BETA-ALANINE LIGASE"/>
    <property type="match status" value="1"/>
</dbReference>
<dbReference type="Pfam" id="PF02569">
    <property type="entry name" value="Pantoate_ligase"/>
    <property type="match status" value="1"/>
</dbReference>
<dbReference type="SUPFAM" id="SSF52374">
    <property type="entry name" value="Nucleotidylyl transferase"/>
    <property type="match status" value="1"/>
</dbReference>
<keyword id="KW-0067">ATP-binding</keyword>
<keyword id="KW-0963">Cytoplasm</keyword>
<keyword id="KW-0903">Direct protein sequencing</keyword>
<keyword id="KW-0436">Ligase</keyword>
<keyword id="KW-0547">Nucleotide-binding</keyword>
<keyword id="KW-0566">Pantothenate biosynthesis</keyword>
<evidence type="ECO:0000269" key="1">
    <source>
    </source>
</evidence>
<evidence type="ECO:0000305" key="2"/>
<feature type="initiator methionine" description="Removed" evidence="1">
    <location>
        <position position="1"/>
    </location>
</feature>
<feature type="propeptide" id="PRO_0000023005" description="Removed; partial">
    <location>
        <position position="2"/>
    </location>
</feature>
<feature type="chain" id="PRO_0000023006" description="Pantoate--beta-alanine ligase">
    <location>
        <begin position="3"/>
        <end position="308"/>
    </location>
</feature>
<gene>
    <name type="primary">PANC</name>
</gene>
<reference key="1">
    <citation type="journal article" date="1999" name="Biochem. J.">
        <title>The final step of pantothenate biosynthesis in higher plants: cloning and characterization of pantothenate synthetase from Lotus japonicus and Oryza sativum (rice).</title>
        <authorList>
            <person name="Genschel U."/>
            <person name="Powell C.A."/>
            <person name="Abell C."/>
            <person name="Smith A.G."/>
        </authorList>
    </citation>
    <scope>NUCLEOTIDE SEQUENCE [MRNA]</scope>
    <scope>PROTEIN SEQUENCE OF 2-17</scope>
    <scope>TISSUE SPECIFICITY</scope>
    <source>
        <strain>cv. Gifu / B-129</strain>
        <tissue>Root nodule</tissue>
    </source>
</reference>
<protein>
    <recommendedName>
        <fullName>Pantoate--beta-alanine ligase</fullName>
        <ecNumber>6.3.2.1</ecNumber>
    </recommendedName>
    <alternativeName>
        <fullName>Pantoate-activating enzyme</fullName>
    </alternativeName>
    <alternativeName>
        <fullName>Pantothenate synthetase</fullName>
    </alternativeName>
</protein>
<name>PANC_LOTJA</name>
<accession>O24035</accession>
<proteinExistence type="evidence at protein level"/>
<sequence length="308" mass="34240">MAPMVISDKDEMRKWSRSMRSQGKLIALVPTMGFLHEGHLSLVRDAHNHADLVAVSIYVNPGQFSPTEDLSAYPSDFQGDLQKLMSVPGGVDVVFHPHNLYDYGGDGGDAVAECGGDGVVSCVDRRSGFGHETWVRAEKLEKPLCGKSRPVFFRGVATIVTKLFNIVEPDVAVFGKKDYQQWKIIQRMVRDLDFSIKVIGSEVIREKDGLAMSSRNVYLSPEEREKAVSINKSLFRAKSAAEDGQIHCEKLINLVVQSITEAGGRIDYAEIVDQNNLEKVEWIKGPVVFCVSAWFGKARLIDNIEINL</sequence>
<organism>
    <name type="scientific">Lotus japonicus</name>
    <name type="common">Lotus corniculatus var. japonicus</name>
    <dbReference type="NCBI Taxonomy" id="34305"/>
    <lineage>
        <taxon>Eukaryota</taxon>
        <taxon>Viridiplantae</taxon>
        <taxon>Streptophyta</taxon>
        <taxon>Embryophyta</taxon>
        <taxon>Tracheophyta</taxon>
        <taxon>Spermatophyta</taxon>
        <taxon>Magnoliopsida</taxon>
        <taxon>eudicotyledons</taxon>
        <taxon>Gunneridae</taxon>
        <taxon>Pentapetalae</taxon>
        <taxon>rosids</taxon>
        <taxon>fabids</taxon>
        <taxon>Fabales</taxon>
        <taxon>Fabaceae</taxon>
        <taxon>Papilionoideae</taxon>
        <taxon>50 kb inversion clade</taxon>
        <taxon>NPAAA clade</taxon>
        <taxon>Hologalegina</taxon>
        <taxon>robinioid clade</taxon>
        <taxon>Loteae</taxon>
        <taxon>Lotus</taxon>
    </lineage>
</organism>
<comment type="catalytic activity">
    <reaction>
        <text>(R)-pantoate + beta-alanine + ATP = (R)-pantothenate + AMP + diphosphate + H(+)</text>
        <dbReference type="Rhea" id="RHEA:10912"/>
        <dbReference type="ChEBI" id="CHEBI:15378"/>
        <dbReference type="ChEBI" id="CHEBI:15980"/>
        <dbReference type="ChEBI" id="CHEBI:29032"/>
        <dbReference type="ChEBI" id="CHEBI:30616"/>
        <dbReference type="ChEBI" id="CHEBI:33019"/>
        <dbReference type="ChEBI" id="CHEBI:57966"/>
        <dbReference type="ChEBI" id="CHEBI:456215"/>
        <dbReference type="EC" id="6.3.2.1"/>
    </reaction>
</comment>
<comment type="biophysicochemical properties">
    <phDependence>
        <text>Optimum pH is 7.8. Activity decreases sharply with increasing acidity and is null at pH 7. There is only a slight decrease toward higher pH.</text>
    </phDependence>
</comment>
<comment type="pathway">
    <text>Cofactor biosynthesis; (R)-pantothenate biosynthesis; (R)-pantothenate from (R)-pantoate and beta-alanine: step 1/1.</text>
</comment>
<comment type="subunit">
    <text evidence="2">Homodimer.</text>
</comment>
<comment type="subcellular location">
    <subcellularLocation>
        <location evidence="2">Cytoplasm</location>
    </subcellularLocation>
</comment>
<comment type="tissue specificity">
    <text evidence="1">Expressed at low levels in leaf and root.</text>
</comment>
<comment type="similarity">
    <text evidence="2">Belongs to the pantothenate synthetase family.</text>
</comment>